<feature type="chain" id="PRO_0000382071" description="ATP synthase subunit delta">
    <location>
        <begin position="1"/>
        <end position="176"/>
    </location>
</feature>
<keyword id="KW-0066">ATP synthesis</keyword>
<keyword id="KW-0997">Cell inner membrane</keyword>
<keyword id="KW-1003">Cell membrane</keyword>
<keyword id="KW-0139">CF(1)</keyword>
<keyword id="KW-0375">Hydrogen ion transport</keyword>
<keyword id="KW-0406">Ion transport</keyword>
<keyword id="KW-0472">Membrane</keyword>
<keyword id="KW-0813">Transport</keyword>
<dbReference type="EMBL" id="CP000487">
    <property type="protein sequence ID" value="ABK82602.1"/>
    <property type="molecule type" value="Genomic_DNA"/>
</dbReference>
<dbReference type="RefSeq" id="WP_002850543.1">
    <property type="nucleotide sequence ID" value="NC_008599.1"/>
</dbReference>
<dbReference type="SMR" id="A0RR29"/>
<dbReference type="KEGG" id="cff:CFF8240_1528"/>
<dbReference type="eggNOG" id="COG0712">
    <property type="taxonomic scope" value="Bacteria"/>
</dbReference>
<dbReference type="HOGENOM" id="CLU_085114_3_1_7"/>
<dbReference type="Proteomes" id="UP000000760">
    <property type="component" value="Chromosome"/>
</dbReference>
<dbReference type="GO" id="GO:0005886">
    <property type="term" value="C:plasma membrane"/>
    <property type="evidence" value="ECO:0007669"/>
    <property type="project" value="UniProtKB-SubCell"/>
</dbReference>
<dbReference type="GO" id="GO:0045259">
    <property type="term" value="C:proton-transporting ATP synthase complex"/>
    <property type="evidence" value="ECO:0007669"/>
    <property type="project" value="UniProtKB-KW"/>
</dbReference>
<dbReference type="GO" id="GO:0046933">
    <property type="term" value="F:proton-transporting ATP synthase activity, rotational mechanism"/>
    <property type="evidence" value="ECO:0007669"/>
    <property type="project" value="UniProtKB-UniRule"/>
</dbReference>
<dbReference type="Gene3D" id="1.10.520.20">
    <property type="entry name" value="N-terminal domain of the delta subunit of the F1F0-ATP synthase"/>
    <property type="match status" value="1"/>
</dbReference>
<dbReference type="HAMAP" id="MF_01416">
    <property type="entry name" value="ATP_synth_delta_bact"/>
    <property type="match status" value="1"/>
</dbReference>
<dbReference type="InterPro" id="IPR026015">
    <property type="entry name" value="ATP_synth_OSCP/delta_N_sf"/>
</dbReference>
<dbReference type="InterPro" id="IPR000711">
    <property type="entry name" value="ATPase_OSCP/dsu"/>
</dbReference>
<dbReference type="NCBIfam" id="TIGR01145">
    <property type="entry name" value="ATP_synt_delta"/>
    <property type="match status" value="1"/>
</dbReference>
<dbReference type="NCBIfam" id="NF006291">
    <property type="entry name" value="PRK08474.1"/>
    <property type="match status" value="1"/>
</dbReference>
<dbReference type="Pfam" id="PF00213">
    <property type="entry name" value="OSCP"/>
    <property type="match status" value="1"/>
</dbReference>
<dbReference type="PRINTS" id="PR00125">
    <property type="entry name" value="ATPASEDELTA"/>
</dbReference>
<dbReference type="SUPFAM" id="SSF47928">
    <property type="entry name" value="N-terminal domain of the delta subunit of the F1F0-ATP synthase"/>
    <property type="match status" value="1"/>
</dbReference>
<accession>A0RR29</accession>
<organism>
    <name type="scientific">Campylobacter fetus subsp. fetus (strain 82-40)</name>
    <dbReference type="NCBI Taxonomy" id="360106"/>
    <lineage>
        <taxon>Bacteria</taxon>
        <taxon>Pseudomonadati</taxon>
        <taxon>Campylobacterota</taxon>
        <taxon>Epsilonproteobacteria</taxon>
        <taxon>Campylobacterales</taxon>
        <taxon>Campylobacteraceae</taxon>
        <taxon>Campylobacter</taxon>
    </lineage>
</organism>
<sequence>MKEVVAKKYVKALILSLSSDEFDKLGNELKDISNAFLLPKLKVIIDSPDISSKQKADFLFSLLDNASNKIHNFLLLLAERKRLGLIPEISKEFEYQQAVRDCKFSGLISGNFELSAAQKTELEERFSKKFGAKIEFENIKNNYNGIKIELDDLGVEVSFSIDRLKAQMSEYILKAI</sequence>
<protein>
    <recommendedName>
        <fullName evidence="1">ATP synthase subunit delta</fullName>
    </recommendedName>
    <alternativeName>
        <fullName evidence="1">ATP synthase F(1) sector subunit delta</fullName>
    </alternativeName>
    <alternativeName>
        <fullName evidence="1">F-type ATPase subunit delta</fullName>
        <shortName evidence="1">F-ATPase subunit delta</shortName>
    </alternativeName>
</protein>
<name>ATPD_CAMFF</name>
<comment type="function">
    <text evidence="1">F(1)F(0) ATP synthase produces ATP from ADP in the presence of a proton or sodium gradient. F-type ATPases consist of two structural domains, F(1) containing the extramembraneous catalytic core and F(0) containing the membrane proton channel, linked together by a central stalk and a peripheral stalk. During catalysis, ATP synthesis in the catalytic domain of F(1) is coupled via a rotary mechanism of the central stalk subunits to proton translocation.</text>
</comment>
<comment type="function">
    <text evidence="1">This protein is part of the stalk that links CF(0) to CF(1). It either transmits conformational changes from CF(0) to CF(1) or is implicated in proton conduction.</text>
</comment>
<comment type="subunit">
    <text evidence="1">F-type ATPases have 2 components, F(1) - the catalytic core - and F(0) - the membrane proton channel. F(1) has five subunits: alpha(3), beta(3), gamma(1), delta(1), epsilon(1). F(0) has three main subunits: a(1), b(2) and c(10-14). The alpha and beta chains form an alternating ring which encloses part of the gamma chain. F(1) is attached to F(0) by a central stalk formed by the gamma and epsilon chains, while a peripheral stalk is formed by the delta and b chains.</text>
</comment>
<comment type="subcellular location">
    <subcellularLocation>
        <location evidence="1">Cell inner membrane</location>
        <topology evidence="1">Peripheral membrane protein</topology>
    </subcellularLocation>
</comment>
<comment type="similarity">
    <text evidence="1">Belongs to the ATPase delta chain family.</text>
</comment>
<proteinExistence type="inferred from homology"/>
<evidence type="ECO:0000255" key="1">
    <source>
        <dbReference type="HAMAP-Rule" id="MF_01416"/>
    </source>
</evidence>
<reference key="1">
    <citation type="submission" date="2006-11" db="EMBL/GenBank/DDBJ databases">
        <title>Sequence of Campylobacter fetus subsp. fetus 82-40.</title>
        <authorList>
            <person name="Fouts D.E."/>
            <person name="Nelson K.E."/>
        </authorList>
    </citation>
    <scope>NUCLEOTIDE SEQUENCE [LARGE SCALE GENOMIC DNA]</scope>
    <source>
        <strain>82-40</strain>
    </source>
</reference>
<gene>
    <name evidence="1" type="primary">atpH</name>
    <name type="ordered locus">CFF8240_1528</name>
</gene>